<keyword id="KW-1185">Reference proteome</keyword>
<organism>
    <name type="scientific">Dictyostelium discoideum</name>
    <name type="common">Social amoeba</name>
    <dbReference type="NCBI Taxonomy" id="44689"/>
    <lineage>
        <taxon>Eukaryota</taxon>
        <taxon>Amoebozoa</taxon>
        <taxon>Evosea</taxon>
        <taxon>Eumycetozoa</taxon>
        <taxon>Dictyostelia</taxon>
        <taxon>Dictyosteliales</taxon>
        <taxon>Dictyosteliaceae</taxon>
        <taxon>Dictyostelium</taxon>
    </lineage>
</organism>
<sequence length="78" mass="7545">MTLFSSITSISKTNTSSKSSLNSFSGSSLSMGSNSVACGGCDKPAAGAAILANIDIKAKVDLSLSAAAAASAKCGACH</sequence>
<dbReference type="EMBL" id="AAFI02000022">
    <property type="protein sequence ID" value="EAL68543.1"/>
    <property type="molecule type" value="Genomic_DNA"/>
</dbReference>
<dbReference type="RefSeq" id="XP_642472.1">
    <property type="nucleotide sequence ID" value="XM_637380.1"/>
</dbReference>
<dbReference type="FunCoup" id="Q86KU0">
    <property type="interactions" value="243"/>
</dbReference>
<dbReference type="PaxDb" id="44689-DDB0252781"/>
<dbReference type="EnsemblProtists" id="EAL68543">
    <property type="protein sequence ID" value="EAL68543"/>
    <property type="gene ID" value="DDB_G0277739"/>
</dbReference>
<dbReference type="GeneID" id="8621183"/>
<dbReference type="KEGG" id="ddi:DDB_G0277739"/>
<dbReference type="dictyBase" id="DDB_G0277739"/>
<dbReference type="HOGENOM" id="CLU_181850_0_0_1"/>
<dbReference type="InParanoid" id="Q86KU0"/>
<dbReference type="PRO" id="PR:Q86KU0"/>
<dbReference type="Proteomes" id="UP000002195">
    <property type="component" value="Chromosome 2"/>
</dbReference>
<dbReference type="GO" id="GO:0030587">
    <property type="term" value="P:sorocarp development"/>
    <property type="evidence" value="ECO:0000318"/>
    <property type="project" value="GO_Central"/>
</dbReference>
<dbReference type="InterPro" id="IPR050533">
    <property type="entry name" value="HssA/B-like_chaperone"/>
</dbReference>
<dbReference type="InterPro" id="IPR008455">
    <property type="entry name" value="HssA/B-related"/>
</dbReference>
<dbReference type="PANTHER" id="PTHR31059">
    <property type="entry name" value="HSSA/B-LIKE PROTEIN 1-RELATED-RELATED"/>
    <property type="match status" value="1"/>
</dbReference>
<dbReference type="PANTHER" id="PTHR31059:SF5">
    <property type="entry name" value="HSSA_B-LIKE PROTEIN 1-RELATED"/>
    <property type="match status" value="1"/>
</dbReference>
<dbReference type="Pfam" id="PF05710">
    <property type="entry name" value="Coiled"/>
    <property type="match status" value="1"/>
</dbReference>
<evidence type="ECO:0000256" key="1">
    <source>
        <dbReference type="SAM" id="MobiDB-lite"/>
    </source>
</evidence>
<evidence type="ECO:0000305" key="2"/>
<name>HSL29_DICDI</name>
<proteinExistence type="inferred from homology"/>
<reference key="1">
    <citation type="journal article" date="2002" name="Nature">
        <title>Sequence and analysis of chromosome 2 of Dictyostelium discoideum.</title>
        <authorList>
            <person name="Gloeckner G."/>
            <person name="Eichinger L."/>
            <person name="Szafranski K."/>
            <person name="Pachebat J.A."/>
            <person name="Bankier A.T."/>
            <person name="Dear P.H."/>
            <person name="Lehmann R."/>
            <person name="Baumgart C."/>
            <person name="Parra G."/>
            <person name="Abril J.F."/>
            <person name="Guigo R."/>
            <person name="Kumpf K."/>
            <person name="Tunggal B."/>
            <person name="Cox E.C."/>
            <person name="Quail M.A."/>
            <person name="Platzer M."/>
            <person name="Rosenthal A."/>
            <person name="Noegel A.A."/>
        </authorList>
    </citation>
    <scope>NUCLEOTIDE SEQUENCE [LARGE SCALE GENOMIC DNA]</scope>
    <source>
        <strain>AX4</strain>
    </source>
</reference>
<reference key="2">
    <citation type="journal article" date="2005" name="Nature">
        <title>The genome of the social amoeba Dictyostelium discoideum.</title>
        <authorList>
            <person name="Eichinger L."/>
            <person name="Pachebat J.A."/>
            <person name="Gloeckner G."/>
            <person name="Rajandream M.A."/>
            <person name="Sucgang R."/>
            <person name="Berriman M."/>
            <person name="Song J."/>
            <person name="Olsen R."/>
            <person name="Szafranski K."/>
            <person name="Xu Q."/>
            <person name="Tunggal B."/>
            <person name="Kummerfeld S."/>
            <person name="Madera M."/>
            <person name="Konfortov B.A."/>
            <person name="Rivero F."/>
            <person name="Bankier A.T."/>
            <person name="Lehmann R."/>
            <person name="Hamlin N."/>
            <person name="Davies R."/>
            <person name="Gaudet P."/>
            <person name="Fey P."/>
            <person name="Pilcher K."/>
            <person name="Chen G."/>
            <person name="Saunders D."/>
            <person name="Sodergren E.J."/>
            <person name="Davis P."/>
            <person name="Kerhornou A."/>
            <person name="Nie X."/>
            <person name="Hall N."/>
            <person name="Anjard C."/>
            <person name="Hemphill L."/>
            <person name="Bason N."/>
            <person name="Farbrother P."/>
            <person name="Desany B."/>
            <person name="Just E."/>
            <person name="Morio T."/>
            <person name="Rost R."/>
            <person name="Churcher C.M."/>
            <person name="Cooper J."/>
            <person name="Haydock S."/>
            <person name="van Driessche N."/>
            <person name="Cronin A."/>
            <person name="Goodhead I."/>
            <person name="Muzny D.M."/>
            <person name="Mourier T."/>
            <person name="Pain A."/>
            <person name="Lu M."/>
            <person name="Harper D."/>
            <person name="Lindsay R."/>
            <person name="Hauser H."/>
            <person name="James K.D."/>
            <person name="Quiles M."/>
            <person name="Madan Babu M."/>
            <person name="Saito T."/>
            <person name="Buchrieser C."/>
            <person name="Wardroper A."/>
            <person name="Felder M."/>
            <person name="Thangavelu M."/>
            <person name="Johnson D."/>
            <person name="Knights A."/>
            <person name="Loulseged H."/>
            <person name="Mungall K.L."/>
            <person name="Oliver K."/>
            <person name="Price C."/>
            <person name="Quail M.A."/>
            <person name="Urushihara H."/>
            <person name="Hernandez J."/>
            <person name="Rabbinowitsch E."/>
            <person name="Steffen D."/>
            <person name="Sanders M."/>
            <person name="Ma J."/>
            <person name="Kohara Y."/>
            <person name="Sharp S."/>
            <person name="Simmonds M.N."/>
            <person name="Spiegler S."/>
            <person name="Tivey A."/>
            <person name="Sugano S."/>
            <person name="White B."/>
            <person name="Walker D."/>
            <person name="Woodward J.R."/>
            <person name="Winckler T."/>
            <person name="Tanaka Y."/>
            <person name="Shaulsky G."/>
            <person name="Schleicher M."/>
            <person name="Weinstock G.M."/>
            <person name="Rosenthal A."/>
            <person name="Cox E.C."/>
            <person name="Chisholm R.L."/>
            <person name="Gibbs R.A."/>
            <person name="Loomis W.F."/>
            <person name="Platzer M."/>
            <person name="Kay R.R."/>
            <person name="Williams J.G."/>
            <person name="Dear P.H."/>
            <person name="Noegel A.A."/>
            <person name="Barrell B.G."/>
            <person name="Kuspa A."/>
        </authorList>
    </citation>
    <scope>NUCLEOTIDE SEQUENCE [LARGE SCALE GENOMIC DNA]</scope>
    <source>
        <strain>AX4</strain>
    </source>
</reference>
<gene>
    <name type="primary">hssl29</name>
    <name type="ORF">DDB_G0277739</name>
</gene>
<protein>
    <recommendedName>
        <fullName>HssA/B-like protein 29</fullName>
    </recommendedName>
</protein>
<feature type="chain" id="PRO_0000330398" description="HssA/B-like protein 29">
    <location>
        <begin position="1"/>
        <end position="78"/>
    </location>
</feature>
<feature type="region of interest" description="Disordered" evidence="1">
    <location>
        <begin position="1"/>
        <end position="31"/>
    </location>
</feature>
<comment type="similarity">
    <text evidence="2">Belongs to the hssA/B family.</text>
</comment>
<accession>Q86KU0</accession>
<accession>Q54Z81</accession>